<evidence type="ECO:0000250" key="1">
    <source>
        <dbReference type="UniProtKB" id="Q9Y295"/>
    </source>
</evidence>
<evidence type="ECO:0000255" key="2">
    <source>
        <dbReference type="PROSITE-ProRule" id="PRU01047"/>
    </source>
</evidence>
<evidence type="ECO:0000255" key="3">
    <source>
        <dbReference type="PROSITE-ProRule" id="PRU01228"/>
    </source>
</evidence>
<evidence type="ECO:0000269" key="4">
    <source>
    </source>
</evidence>
<evidence type="ECO:0000269" key="5">
    <source>
    </source>
</evidence>
<evidence type="ECO:0000269" key="6">
    <source>
    </source>
</evidence>
<dbReference type="EC" id="3.6.5.-"/>
<dbReference type="EMBL" id="D13865">
    <property type="protein sequence ID" value="BAA02978.1"/>
    <property type="molecule type" value="mRNA"/>
</dbReference>
<dbReference type="PIR" id="I51426">
    <property type="entry name" value="I51426"/>
</dbReference>
<dbReference type="RefSeq" id="NP_001084013.1">
    <property type="nucleotide sequence ID" value="NM_001090544.1"/>
</dbReference>
<dbReference type="SMR" id="P43690"/>
<dbReference type="BioGRID" id="100578">
    <property type="interactions" value="1"/>
</dbReference>
<dbReference type="IntAct" id="P43690">
    <property type="interactions" value="1"/>
</dbReference>
<dbReference type="DNASU" id="399253"/>
<dbReference type="GeneID" id="399253"/>
<dbReference type="KEGG" id="xla:399253"/>
<dbReference type="AGR" id="Xenbase:XB-GENE-980759"/>
<dbReference type="CTD" id="399253"/>
<dbReference type="Xenbase" id="XB-GENE-980759">
    <property type="gene designation" value="drg1.L"/>
</dbReference>
<dbReference type="OMA" id="SAKHPGQ"/>
<dbReference type="OrthoDB" id="603at2759"/>
<dbReference type="Proteomes" id="UP000186698">
    <property type="component" value="Chromosome 1L"/>
</dbReference>
<dbReference type="Bgee" id="399253">
    <property type="expression patterns" value="Expressed in ovary and 19 other cell types or tissues"/>
</dbReference>
<dbReference type="GO" id="GO:0005737">
    <property type="term" value="C:cytoplasm"/>
    <property type="evidence" value="ECO:0000318"/>
    <property type="project" value="GO_Central"/>
</dbReference>
<dbReference type="GO" id="GO:0005634">
    <property type="term" value="C:nucleus"/>
    <property type="evidence" value="ECO:0007669"/>
    <property type="project" value="UniProtKB-SubCell"/>
</dbReference>
<dbReference type="GO" id="GO:0005525">
    <property type="term" value="F:GTP binding"/>
    <property type="evidence" value="ECO:0000318"/>
    <property type="project" value="GO_Central"/>
</dbReference>
<dbReference type="GO" id="GO:0003924">
    <property type="term" value="F:GTPase activity"/>
    <property type="evidence" value="ECO:0007669"/>
    <property type="project" value="InterPro"/>
</dbReference>
<dbReference type="GO" id="GO:0046872">
    <property type="term" value="F:metal ion binding"/>
    <property type="evidence" value="ECO:0007669"/>
    <property type="project" value="UniProtKB-KW"/>
</dbReference>
<dbReference type="GO" id="GO:0008017">
    <property type="term" value="F:microtubule binding"/>
    <property type="evidence" value="ECO:0000314"/>
    <property type="project" value="UniProtKB"/>
</dbReference>
<dbReference type="GO" id="GO:0002181">
    <property type="term" value="P:cytoplasmic translation"/>
    <property type="evidence" value="ECO:0000318"/>
    <property type="project" value="GO_Central"/>
</dbReference>
<dbReference type="GO" id="GO:0001578">
    <property type="term" value="P:microtubule bundle formation"/>
    <property type="evidence" value="ECO:0000314"/>
    <property type="project" value="UniProtKB"/>
</dbReference>
<dbReference type="GO" id="GO:0031116">
    <property type="term" value="P:positive regulation of microtubule polymerization"/>
    <property type="evidence" value="ECO:0000314"/>
    <property type="project" value="UniProtKB"/>
</dbReference>
<dbReference type="CDD" id="cd01896">
    <property type="entry name" value="DRG"/>
    <property type="match status" value="1"/>
</dbReference>
<dbReference type="CDD" id="cd17230">
    <property type="entry name" value="TGS_DRG1"/>
    <property type="match status" value="1"/>
</dbReference>
<dbReference type="FunFam" id="3.10.20.30:FF:000003">
    <property type="entry name" value="Developmentally-regulated GTP-binding protein 1"/>
    <property type="match status" value="1"/>
</dbReference>
<dbReference type="FunFam" id="3.40.50.300:FF:002634">
    <property type="entry name" value="Small GTP-binding protein"/>
    <property type="match status" value="1"/>
</dbReference>
<dbReference type="Gene3D" id="3.10.20.30">
    <property type="match status" value="1"/>
</dbReference>
<dbReference type="Gene3D" id="6.10.140.1070">
    <property type="match status" value="2"/>
</dbReference>
<dbReference type="InterPro" id="IPR012675">
    <property type="entry name" value="Beta-grasp_dom_sf"/>
</dbReference>
<dbReference type="InterPro" id="IPR045001">
    <property type="entry name" value="DRG"/>
</dbReference>
<dbReference type="InterPro" id="IPR031167">
    <property type="entry name" value="G_OBG"/>
</dbReference>
<dbReference type="InterPro" id="IPR006073">
    <property type="entry name" value="GTP-bd"/>
</dbReference>
<dbReference type="InterPro" id="IPR031662">
    <property type="entry name" value="GTP-binding_2"/>
</dbReference>
<dbReference type="InterPro" id="IPR006074">
    <property type="entry name" value="GTP1-OBG_CS"/>
</dbReference>
<dbReference type="InterPro" id="IPR027417">
    <property type="entry name" value="P-loop_NTPase"/>
</dbReference>
<dbReference type="InterPro" id="IPR005225">
    <property type="entry name" value="Small_GTP-bd"/>
</dbReference>
<dbReference type="InterPro" id="IPR004095">
    <property type="entry name" value="TGS"/>
</dbReference>
<dbReference type="InterPro" id="IPR012676">
    <property type="entry name" value="TGS-like"/>
</dbReference>
<dbReference type="NCBIfam" id="TIGR00231">
    <property type="entry name" value="small_GTP"/>
    <property type="match status" value="1"/>
</dbReference>
<dbReference type="PANTHER" id="PTHR43127">
    <property type="entry name" value="DEVELOPMENTALLY-REGULATED GTP-BINDING PROTEIN 2"/>
    <property type="match status" value="1"/>
</dbReference>
<dbReference type="Pfam" id="PF01926">
    <property type="entry name" value="MMR_HSR1"/>
    <property type="match status" value="1"/>
</dbReference>
<dbReference type="Pfam" id="PF16897">
    <property type="entry name" value="MMR_HSR1_Xtn"/>
    <property type="match status" value="1"/>
</dbReference>
<dbReference type="Pfam" id="PF02824">
    <property type="entry name" value="TGS"/>
    <property type="match status" value="1"/>
</dbReference>
<dbReference type="PRINTS" id="PR00326">
    <property type="entry name" value="GTP1OBG"/>
</dbReference>
<dbReference type="SUPFAM" id="SSF52540">
    <property type="entry name" value="P-loop containing nucleoside triphosphate hydrolases"/>
    <property type="match status" value="1"/>
</dbReference>
<dbReference type="SUPFAM" id="SSF81271">
    <property type="entry name" value="TGS-like"/>
    <property type="match status" value="1"/>
</dbReference>
<dbReference type="PROSITE" id="PS51710">
    <property type="entry name" value="G_OBG"/>
    <property type="match status" value="1"/>
</dbReference>
<dbReference type="PROSITE" id="PS00905">
    <property type="entry name" value="GTP1_OBG"/>
    <property type="match status" value="1"/>
</dbReference>
<dbReference type="PROSITE" id="PS51880">
    <property type="entry name" value="TGS"/>
    <property type="match status" value="1"/>
</dbReference>
<reference key="1">
    <citation type="journal article" date="1993" name="Int. J. Dev. Biol.">
        <title>Expression of GTP-binding protein gene drg during Xenopus laevis development.</title>
        <authorList>
            <person name="Kumar S."/>
            <person name="Iwao M."/>
            <person name="Yamagishi T."/>
            <person name="Noda M."/>
            <person name="Asashima M."/>
        </authorList>
    </citation>
    <scope>NUCLEOTIDE SEQUENCE [MRNA]</scope>
    <scope>TISSUE SPECIFICITY</scope>
    <scope>DEVELOPMENTAL STAGE</scope>
</reference>
<reference key="2">
    <citation type="journal article" date="2005" name="Genes Cells">
        <title>Identification of DRG family regulatory proteins (DFRPs): specific regulation of DRG1 and DRG2.</title>
        <authorList>
            <person name="Ishikawa K."/>
            <person name="Azuma S."/>
            <person name="Ikawa S."/>
            <person name="Semba K."/>
            <person name="Inoue J."/>
        </authorList>
    </citation>
    <scope>DEVELOPMENTAL STAGE</scope>
</reference>
<reference key="3">
    <citation type="journal article" date="2017" name="Sci. Rep.">
        <title>Developmentally Regulated GTP binding protein 1 (DRG1) controls microtubule dynamics.</title>
        <authorList>
            <person name="Schellhaus A.K."/>
            <person name="Moreno-Andres D."/>
            <person name="Chugh M."/>
            <person name="Yokoyama H."/>
            <person name="Moschopoulou A."/>
            <person name="De S."/>
            <person name="Bono F."/>
            <person name="Hipp K."/>
            <person name="Schaeffer E."/>
            <person name="Antonin W."/>
        </authorList>
    </citation>
    <scope>FUNCTION</scope>
    <scope>MUTAGENESIS OF PRO-73 AND SER-78</scope>
</reference>
<proteinExistence type="evidence at protein level"/>
<name>DRG1_XENLA</name>
<sequence>MSGTLARIAEIEAEMARTQKNKATAYHLGLLKARLAKLRRELITPKGGGGGGPGEGFDVAKTGDARIGFVGFPSVGKSTLLSNLAGVYSEVAAYEFTTLTTVPGVVRYKGAKIQLLDLPGIIEGAKDGKGRGRQVIAVARTCNLILIVLDVLKPLGHKKIIENELEGFGIRLNKQPPNIGFKKKDKGGINLTATCAQSELDNDTVKSILAEYKIHNADITLRSDATADDLIDVVEGNRVYIPCIYVLNKIDQISIEELDIIYKVPHCVPISAHHRWNFDDLLEKIWDYLQLVRIYTKPKGQLPDYTSPVVLPCSHTAAEDFCTKIHKNLIKEFKYALVWGSSVKHNPQKVGKDHVLEDEDVIQIVKK</sequence>
<keyword id="KW-0963">Cytoplasm</keyword>
<keyword id="KW-0342">GTP-binding</keyword>
<keyword id="KW-0378">Hydrolase</keyword>
<keyword id="KW-0460">Magnesium</keyword>
<keyword id="KW-0479">Metal-binding</keyword>
<keyword id="KW-0547">Nucleotide-binding</keyword>
<keyword id="KW-0539">Nucleus</keyword>
<keyword id="KW-1185">Reference proteome</keyword>
<gene>
    <name type="primary">drg1</name>
    <name type="synonym">drg</name>
</gene>
<comment type="function">
    <text evidence="1 5">Catalyzes the conversion of GTP to GDP through hydrolysis of the gamma-phosphate bond in GTP (By similarity). Binds to microtubules and promotes microtubule polymerization and bundling. GTPase activity is not necessary for these microtubule-related functions (PubMed:28855639).</text>
</comment>
<comment type="catalytic activity">
    <reaction evidence="1">
        <text>GTP + H2O = GDP + phosphate + H(+)</text>
        <dbReference type="Rhea" id="RHEA:19669"/>
        <dbReference type="ChEBI" id="CHEBI:15377"/>
        <dbReference type="ChEBI" id="CHEBI:15378"/>
        <dbReference type="ChEBI" id="CHEBI:37565"/>
        <dbReference type="ChEBI" id="CHEBI:43474"/>
        <dbReference type="ChEBI" id="CHEBI:58189"/>
    </reaction>
</comment>
<comment type="cofactor">
    <cofactor evidence="1">
        <name>Mg(2+)</name>
        <dbReference type="ChEBI" id="CHEBI:18420"/>
    </cofactor>
</comment>
<comment type="cofactor">
    <cofactor evidence="1">
        <name>K(+)</name>
        <dbReference type="ChEBI" id="CHEBI:29103"/>
    </cofactor>
</comment>
<comment type="subcellular location">
    <subcellularLocation>
        <location evidence="1">Nucleus</location>
    </subcellularLocation>
    <subcellularLocation>
        <location evidence="1">Cytoplasm</location>
    </subcellularLocation>
</comment>
<comment type="tissue specificity">
    <text evidence="6">Expressed in many adult amd embryonic tissues. In adults, highest levels in ovaries and testes, followed by skeletal muscle, stomach, brain, kidney and liver. Weak expression in heart and brain.</text>
</comment>
<comment type="developmental stage">
    <text evidence="4 6">At stage 22, expressed in blood islands, somites, eyes, trunk neural crest, mandibular crest segment, hyoid crest segment and branchial crest segment. At stage 32, expressed in otic vesicle, pronephros, forebraiin, midbrain, hindbrain, branchial arch, eyes, lens, spinal cord and notochord.</text>
</comment>
<comment type="similarity">
    <text evidence="2">Belongs to the TRAFAC class OBG-HflX-like GTPase superfamily. OBG GTPase family.</text>
</comment>
<protein>
    <recommendedName>
        <fullName>Developmentally-regulated GTP-binding protein 1</fullName>
        <shortName>DRG-1</shortName>
        <shortName>xDRG</shortName>
    </recommendedName>
    <alternativeName>
        <fullName>Translation factor GTPase DRG1</fullName>
        <shortName>TRAFAC GTPase DRG1</shortName>
        <ecNumber>3.6.5.-</ecNumber>
    </alternativeName>
</protein>
<organism>
    <name type="scientific">Xenopus laevis</name>
    <name type="common">African clawed frog</name>
    <dbReference type="NCBI Taxonomy" id="8355"/>
    <lineage>
        <taxon>Eukaryota</taxon>
        <taxon>Metazoa</taxon>
        <taxon>Chordata</taxon>
        <taxon>Craniata</taxon>
        <taxon>Vertebrata</taxon>
        <taxon>Euteleostomi</taxon>
        <taxon>Amphibia</taxon>
        <taxon>Batrachia</taxon>
        <taxon>Anura</taxon>
        <taxon>Pipoidea</taxon>
        <taxon>Pipidae</taxon>
        <taxon>Xenopodinae</taxon>
        <taxon>Xenopus</taxon>
        <taxon>Xenopus</taxon>
    </lineage>
</organism>
<accession>P43690</accession>
<feature type="chain" id="PRO_0000205426" description="Developmentally-regulated GTP-binding protein 1">
    <location>
        <begin position="1"/>
        <end position="367"/>
    </location>
</feature>
<feature type="domain" description="OBG-type G" evidence="2">
    <location>
        <begin position="65"/>
        <end position="290"/>
    </location>
</feature>
<feature type="domain" description="TGS" evidence="3">
    <location>
        <begin position="290"/>
        <end position="366"/>
    </location>
</feature>
<feature type="region of interest" description="Required for interaction with STK16" evidence="1">
    <location>
        <begin position="2"/>
        <end position="16"/>
    </location>
</feature>
<feature type="binding site" evidence="2">
    <location>
        <begin position="71"/>
        <end position="78"/>
    </location>
    <ligand>
        <name>GTP</name>
        <dbReference type="ChEBI" id="CHEBI:37565"/>
    </ligand>
</feature>
<feature type="binding site" evidence="2">
    <location>
        <position position="78"/>
    </location>
    <ligand>
        <name>Mg(2+)</name>
        <dbReference type="ChEBI" id="CHEBI:18420"/>
    </ligand>
</feature>
<feature type="binding site" evidence="2">
    <location>
        <begin position="96"/>
        <end position="100"/>
    </location>
    <ligand>
        <name>GTP</name>
        <dbReference type="ChEBI" id="CHEBI:37565"/>
    </ligand>
</feature>
<feature type="binding site" evidence="2">
    <location>
        <position position="98"/>
    </location>
    <ligand>
        <name>Mg(2+)</name>
        <dbReference type="ChEBI" id="CHEBI:18420"/>
    </ligand>
</feature>
<feature type="binding site" evidence="2">
    <location>
        <begin position="117"/>
        <end position="120"/>
    </location>
    <ligand>
        <name>GTP</name>
        <dbReference type="ChEBI" id="CHEBI:37565"/>
    </ligand>
</feature>
<feature type="binding site" evidence="2">
    <location>
        <begin position="248"/>
        <end position="251"/>
    </location>
    <ligand>
        <name>GTP</name>
        <dbReference type="ChEBI" id="CHEBI:37565"/>
    </ligand>
</feature>
<feature type="binding site" evidence="2">
    <location>
        <begin position="271"/>
        <end position="273"/>
    </location>
    <ligand>
        <name>GTP</name>
        <dbReference type="ChEBI" id="CHEBI:37565"/>
    </ligand>
</feature>
<feature type="mutagenesis site" description="Does not affect the microtubule-related activities, including binding and tubulin polymerization." evidence="5">
    <original>P</original>
    <variation>V</variation>
    <location>
        <position position="73"/>
    </location>
</feature>
<feature type="mutagenesis site" description="Does not affect the microtubule-related activities, including binding and tubulin polymerization." evidence="5">
    <original>S</original>
    <variation>N</variation>
    <location>
        <position position="78"/>
    </location>
</feature>